<sequence length="569" mass="60288">MASMALSLTSSPTYSLSFRSLPSLKPLSKSQPSISLPSLRSNASKSPSLSHKHFLSPPSLLLPHKLKPISASSPTNPPPPPAPVPSPAPVSAPAQVQPWQGASIKPLLASILTGVIIWFIPTPEGVSRNAWQLLAIFLSTIVGIITQPLPLGAVALMGLGASVLTKTLTFSAAFSAFGDPIPWLIALAFFFARGFIKTGLGNRIAYQFVKLFGSSSLGLGYSLVFSEALLAPAIPSVSARAGGIFLPLVKSLCIACGSNVGDGTERKLGAWLMLTCFQTSVISSSMFLTAMAANPLSATLTFNTIGKAIGWMDWAKAAFVPGLVSLIVVPLLLYVVYPPEIKSSPDAPRLAKEKLDKMGPMTKNESIMAVTLLLTVGLWVFGGKLGVDAVTAAILGLSVLLITGVVTWKECLAESVAWDTLTWFAALIAMAGYLNKYGLITWFSENVVKVVGGLGLSWQMSFGVLVLLYFYSHYFFASGAAHIGAMFTAFLSVASALGTPPFLAAIVLSFLSNLMGGLTHYGIGSAPVFYGANYVPLPQWWGYGFLISIVNLIIWLGVGGLWWKAIGLW</sequence>
<keyword id="KW-0150">Chloroplast</keyword>
<keyword id="KW-0903">Direct protein sequencing</keyword>
<keyword id="KW-0472">Membrane</keyword>
<keyword id="KW-0934">Plastid</keyword>
<keyword id="KW-1001">Plastid inner membrane</keyword>
<keyword id="KW-1185">Reference proteome</keyword>
<keyword id="KW-0809">Transit peptide</keyword>
<keyword id="KW-0812">Transmembrane</keyword>
<keyword id="KW-1133">Transmembrane helix</keyword>
<keyword id="KW-0813">Transport</keyword>
<proteinExistence type="evidence at protein level"/>
<gene>
    <name type="primary">DIT1</name>
</gene>
<accession>Q41364</accession>
<dbReference type="EMBL" id="U13238">
    <property type="protein sequence ID" value="AAA68148.1"/>
    <property type="molecule type" value="mRNA"/>
</dbReference>
<dbReference type="SMR" id="Q41364"/>
<dbReference type="TCDB" id="2.A.47.3.1">
    <property type="family name" value="the divalent anion:na(+) symporter (dass) family"/>
</dbReference>
<dbReference type="SABIO-RK" id="Q41364"/>
<dbReference type="Proteomes" id="UP001155700">
    <property type="component" value="Unplaced"/>
</dbReference>
<dbReference type="GO" id="GO:0009941">
    <property type="term" value="C:chloroplast envelope"/>
    <property type="evidence" value="ECO:0000318"/>
    <property type="project" value="GO_Central"/>
</dbReference>
<dbReference type="GO" id="GO:0009706">
    <property type="term" value="C:chloroplast inner membrane"/>
    <property type="evidence" value="ECO:0000314"/>
    <property type="project" value="UniProtKB"/>
</dbReference>
<dbReference type="GO" id="GO:0015139">
    <property type="term" value="F:alpha-ketoglutarate transmembrane transporter activity"/>
    <property type="evidence" value="ECO:0000314"/>
    <property type="project" value="UniProtKB"/>
</dbReference>
<dbReference type="GO" id="GO:0015140">
    <property type="term" value="F:malate transmembrane transporter activity"/>
    <property type="evidence" value="ECO:0000314"/>
    <property type="project" value="UniProtKB"/>
</dbReference>
<dbReference type="GO" id="GO:0015131">
    <property type="term" value="F:oxaloacetate transmembrane transporter activity"/>
    <property type="evidence" value="ECO:0000318"/>
    <property type="project" value="GO_Central"/>
</dbReference>
<dbReference type="GO" id="GO:0015742">
    <property type="term" value="P:alpha-ketoglutarate transport"/>
    <property type="evidence" value="ECO:0000314"/>
    <property type="project" value="UniProtKB"/>
</dbReference>
<dbReference type="GO" id="GO:0015743">
    <property type="term" value="P:malate transport"/>
    <property type="evidence" value="ECO:0000314"/>
    <property type="project" value="UniProtKB"/>
</dbReference>
<dbReference type="CDD" id="cd00625">
    <property type="entry name" value="ArsB_NhaD_permease"/>
    <property type="match status" value="1"/>
</dbReference>
<dbReference type="InterPro" id="IPR030676">
    <property type="entry name" value="CitT-rel"/>
</dbReference>
<dbReference type="InterPro" id="IPR001898">
    <property type="entry name" value="SLC13A/DASS"/>
</dbReference>
<dbReference type="NCBIfam" id="TIGR00785">
    <property type="entry name" value="dass"/>
    <property type="match status" value="1"/>
</dbReference>
<dbReference type="PANTHER" id="PTHR42826">
    <property type="entry name" value="DICARBOXYLATE TRANSPORTER 2.1, CHLOROPLASTIC"/>
    <property type="match status" value="1"/>
</dbReference>
<dbReference type="Pfam" id="PF00939">
    <property type="entry name" value="Na_sulph_symp"/>
    <property type="match status" value="1"/>
</dbReference>
<evidence type="ECO:0000255" key="1"/>
<evidence type="ECO:0000256" key="2">
    <source>
        <dbReference type="SAM" id="MobiDB-lite"/>
    </source>
</evidence>
<evidence type="ECO:0000269" key="3">
    <source>
    </source>
</evidence>
<evidence type="ECO:0000269" key="4">
    <source>
    </source>
</evidence>
<evidence type="ECO:0000305" key="5"/>
<evidence type="ECO:0000305" key="6">
    <source>
    </source>
</evidence>
<reference key="1">
    <citation type="journal article" date="1995" name="Biochemistry">
        <title>The 2-oxoglutarate/malate translocator of chloroplast envelope membranes: molecular cloning of a transporter containing a 12-helix motif and expression of the functional protein in yeast cells.</title>
        <authorList>
            <person name="Weber A."/>
            <person name="Menzlaff E."/>
            <person name="Arbinger B."/>
            <person name="Gutensohn M."/>
            <person name="Eckerskorn C."/>
            <person name="Fluegge U.-I."/>
        </authorList>
    </citation>
    <scope>NUCLEOTIDE SEQUENCE [MRNA]</scope>
    <scope>PROTEIN SEQUENCE OF 439-449</scope>
    <scope>FUNCTION</scope>
    <scope>SUBCELLULAR LOCATION</scope>
    <source>
        <strain>cv. Polka</strain>
        <tissue>Leaf</tissue>
    </source>
</reference>
<reference key="2">
    <citation type="journal article" date="2003" name="Plant J.">
        <title>The Arabidopsis mutant dct is deficient in the plastidic glutamate/malate translocator DiT2.</title>
        <authorList>
            <person name="Renne P."/>
            <person name="Dressen U."/>
            <person name="Hebbeker U."/>
            <person name="Hille D."/>
            <person name="Flugge U.I."/>
            <person name="Westhoff P."/>
            <person name="Weber A.P."/>
        </authorList>
    </citation>
    <scope>FUNCTION</scope>
    <scope>BIOPHYSICOCHEMICAL PROPERTIES</scope>
    <scope>TISSUE SPECIFICITY</scope>
    <scope>INDUCTION</scope>
</reference>
<protein>
    <recommendedName>
        <fullName>Dicarboxylate transporter 1, chloroplastic</fullName>
        <shortName>SODIT1</shortName>
    </recommendedName>
    <alternativeName>
        <fullName>2-oxoglutarate/malate translocator</fullName>
    </alternativeName>
</protein>
<comment type="function">
    <text evidence="3 4">2-oxoglutarate/malate translocator that transports carbon skeletons into chloroplasts for net glutamate synthesis. This translocator exchanges malate for internal succinate, fumarate and 2-oxoglutarate but not for aspartate and glutamate. Involved with DIT2 in primary ammonia assimilation and in the re-assimilation of ammonia generated by the photorespiratory pathway. Imports 2-oxoglutarate into plastids as precursor for ammonia assimilation. 2-oxoglutarate is converted to glutamate, the end product of ammonia assimilation, which is exported to the cytosol by DIT2.</text>
</comment>
<comment type="biophysicochemical properties">
    <kinetics>
        <KM evidence="3">0.35 mM for malate</KM>
        <KM evidence="3">0.17 mM for 2-oxoglutarate</KM>
        <KM evidence="3">0.04 mM for oxaloacetate</KM>
    </kinetics>
</comment>
<comment type="subunit">
    <text evidence="5">Monomer.</text>
</comment>
<comment type="subcellular location">
    <subcellularLocation>
        <location evidence="6">Plastid</location>
        <location evidence="6">Chloroplast inner membrane</location>
        <topology evidence="6">Multi-pass membrane protein</topology>
    </subcellularLocation>
</comment>
<comment type="tissue specificity">
    <text evidence="3">Expressed in leaves.</text>
</comment>
<comment type="induction">
    <text evidence="3">Circadian regulation with a peak in the middle of the light period.</text>
</comment>
<comment type="PTM">
    <text>The N-terminus is blocked.</text>
</comment>
<comment type="similarity">
    <text evidence="5">Belongs to the SLC13A/DASS transporter (TC 2.A.47) family. DIT1 subfamily.</text>
</comment>
<organism>
    <name type="scientific">Spinacia oleracea</name>
    <name type="common">Spinach</name>
    <dbReference type="NCBI Taxonomy" id="3562"/>
    <lineage>
        <taxon>Eukaryota</taxon>
        <taxon>Viridiplantae</taxon>
        <taxon>Streptophyta</taxon>
        <taxon>Embryophyta</taxon>
        <taxon>Tracheophyta</taxon>
        <taxon>Spermatophyta</taxon>
        <taxon>Magnoliopsida</taxon>
        <taxon>eudicotyledons</taxon>
        <taxon>Gunneridae</taxon>
        <taxon>Pentapetalae</taxon>
        <taxon>Caryophyllales</taxon>
        <taxon>Chenopodiaceae</taxon>
        <taxon>Chenopodioideae</taxon>
        <taxon>Anserineae</taxon>
        <taxon>Spinacia</taxon>
    </lineage>
</organism>
<name>DIT1_SPIOL</name>
<feature type="transit peptide" description="Chloroplast" evidence="1">
    <location>
        <begin position="1"/>
        <end position="93"/>
    </location>
</feature>
<feature type="chain" id="PRO_0000032663" description="Dicarboxylate transporter 1, chloroplastic">
    <location>
        <begin position="94"/>
        <end position="569"/>
    </location>
</feature>
<feature type="transmembrane region" description="Helical" evidence="1">
    <location>
        <begin position="106"/>
        <end position="126"/>
    </location>
</feature>
<feature type="transmembrane region" description="Helical" evidence="1">
    <location>
        <begin position="134"/>
        <end position="154"/>
    </location>
</feature>
<feature type="transmembrane region" description="Helical" evidence="1">
    <location>
        <begin position="172"/>
        <end position="192"/>
    </location>
</feature>
<feature type="transmembrane region" description="Helical" evidence="1">
    <location>
        <begin position="241"/>
        <end position="261"/>
    </location>
</feature>
<feature type="transmembrane region" description="Helical" evidence="1">
    <location>
        <begin position="268"/>
        <end position="288"/>
    </location>
</feature>
<feature type="transmembrane region" description="Helical" evidence="1">
    <location>
        <begin position="317"/>
        <end position="337"/>
    </location>
</feature>
<feature type="transmembrane region" description="Helical" evidence="1">
    <location>
        <begin position="367"/>
        <end position="387"/>
    </location>
</feature>
<feature type="transmembrane region" description="Helical" evidence="1">
    <location>
        <begin position="388"/>
        <end position="408"/>
    </location>
</feature>
<feature type="transmembrane region" description="Helical" evidence="1">
    <location>
        <begin position="423"/>
        <end position="443"/>
    </location>
</feature>
<feature type="transmembrane region" description="Helical" evidence="1">
    <location>
        <begin position="450"/>
        <end position="470"/>
    </location>
</feature>
<feature type="transmembrane region" description="Helical" evidence="1">
    <location>
        <begin position="490"/>
        <end position="510"/>
    </location>
</feature>
<feature type="transmembrane region" description="Helical" evidence="1">
    <location>
        <begin position="543"/>
        <end position="563"/>
    </location>
</feature>
<feature type="region of interest" description="Disordered" evidence="2">
    <location>
        <begin position="23"/>
        <end position="93"/>
    </location>
</feature>
<feature type="compositionally biased region" description="Low complexity" evidence="2">
    <location>
        <begin position="23"/>
        <end position="74"/>
    </location>
</feature>
<feature type="compositionally biased region" description="Pro residues" evidence="2">
    <location>
        <begin position="75"/>
        <end position="90"/>
    </location>
</feature>